<feature type="peptide" id="PRO_0000420134" description="Esculentin-2JDb" evidence="2">
    <location>
        <begin position="1"/>
        <end position="37"/>
    </location>
</feature>
<feature type="disulfide bond" evidence="2">
    <location>
        <begin position="31"/>
        <end position="37"/>
    </location>
</feature>
<feature type="unsure residue" description="L or I" evidence="2">
    <location>
        <position position="12"/>
    </location>
</feature>
<feature type="unsure residue" description="I or L" evidence="2">
    <location>
        <position position="13"/>
    </location>
</feature>
<feature type="unsure residue" description="G or K" evidence="2">
    <location>
        <position position="14"/>
    </location>
</feature>
<feature type="unsure residue" description="K or G" evidence="2">
    <location>
        <position position="15"/>
    </location>
</feature>
<feature type="unsure residue" description="G or K" evidence="2">
    <location>
        <position position="22"/>
    </location>
</feature>
<feature type="unsure residue" description="K or G" evidence="2">
    <location>
        <position position="23"/>
    </location>
</feature>
<feature type="unsure residue" description="L or I" evidence="2">
    <location>
        <position position="26"/>
    </location>
</feature>
<feature type="unsure residue" description="L or I" evidence="2">
    <location>
        <position position="28"/>
    </location>
</feature>
<feature type="unsure residue" description="I or L" evidence="2">
    <location>
        <position position="33"/>
    </location>
</feature>
<evidence type="ECO:0000255" key="1"/>
<evidence type="ECO:0000269" key="2">
    <source>
    </source>
</evidence>
<evidence type="ECO:0000303" key="3">
    <source>
    </source>
</evidence>
<evidence type="ECO:0000305" key="4"/>
<evidence type="ECO:0000305" key="5">
    <source>
    </source>
</evidence>
<keyword id="KW-0878">Amphibian defense peptide</keyword>
<keyword id="KW-0044">Antibiotic</keyword>
<keyword id="KW-0929">Antimicrobial</keyword>
<keyword id="KW-0903">Direct protein sequencing</keyword>
<keyword id="KW-1015">Disulfide bond</keyword>
<keyword id="KW-0964">Secreted</keyword>
<name>ES2JB_ODOJI</name>
<reference evidence="4" key="1">
    <citation type="journal article" date="2012" name="J. Proteomics">
        <title>Antimicrobial peptides from the skin of the Asian frog, Odorrana jingdongensis: De novo sequencing and analysis of tandem mass spectrometry data.</title>
        <authorList>
            <person name="Liu J."/>
            <person name="Jiang J."/>
            <person name="Wu Z."/>
            <person name="Xie F."/>
        </authorList>
    </citation>
    <scope>PROTEIN SEQUENCE</scope>
    <scope>PROBABLE FUNCTION</scope>
    <scope>SUBCELLULAR LOCATION</scope>
    <scope>MASS SPECTROMETRY</scope>
    <source>
        <tissue evidence="2">Skin secretion</tissue>
    </source>
</reference>
<comment type="function">
    <text evidence="2 4">Has antibacterial activity against E.coli and S.aureus strains.</text>
</comment>
<comment type="subcellular location">
    <subcellularLocation>
        <location evidence="5">Secreted</location>
    </subcellularLocation>
</comment>
<comment type="tissue specificity">
    <text evidence="5">Expressed by the skin glands.</text>
</comment>
<comment type="mass spectrometry"/>
<comment type="similarity">
    <text evidence="1">Belongs to the frog skin active peptide (FSAP) family. Esculentin subfamily.</text>
</comment>
<comment type="online information" name="The antimicrobial peptide database">
    <link uri="https://wangapd3.com/database/query_output.php?ID=01866"/>
</comment>
<dbReference type="GO" id="GO:0005576">
    <property type="term" value="C:extracellular region"/>
    <property type="evidence" value="ECO:0007669"/>
    <property type="project" value="UniProtKB-SubCell"/>
</dbReference>
<dbReference type="GO" id="GO:0042742">
    <property type="term" value="P:defense response to bacterium"/>
    <property type="evidence" value="ECO:0007669"/>
    <property type="project" value="UniProtKB-KW"/>
</dbReference>
<dbReference type="InterPro" id="IPR012521">
    <property type="entry name" value="Antimicrobial_frog_2"/>
</dbReference>
<dbReference type="Pfam" id="PF08023">
    <property type="entry name" value="Antimicrobial_2"/>
    <property type="match status" value="1"/>
</dbReference>
<protein>
    <recommendedName>
        <fullName evidence="3">Esculentin-2JDb</fullName>
    </recommendedName>
</protein>
<proteinExistence type="evidence at protein level"/>
<organism>
    <name type="scientific">Odorrana jingdongensis</name>
    <name type="common">Jingdong frog</name>
    <name type="synonym">Rana jingdongensis</name>
    <dbReference type="NCBI Taxonomy" id="431936"/>
    <lineage>
        <taxon>Eukaryota</taxon>
        <taxon>Metazoa</taxon>
        <taxon>Chordata</taxon>
        <taxon>Craniata</taxon>
        <taxon>Vertebrata</taxon>
        <taxon>Euteleostomi</taxon>
        <taxon>Amphibia</taxon>
        <taxon>Batrachia</taxon>
        <taxon>Anura</taxon>
        <taxon>Neobatrachia</taxon>
        <taxon>Ranoidea</taxon>
        <taxon>Ranidae</taxon>
        <taxon>Odorrana</taxon>
    </lineage>
</organism>
<sequence>GIFTLIKGAAKLIGKTVAKEAGKTGLELMACKITNQC</sequence>
<accession>B3A0M9</accession>